<name>CBID_SALPA</name>
<accession>Q5PDT5</accession>
<proteinExistence type="inferred from homology"/>
<feature type="chain" id="PRO_0000257778" description="Cobalt-precorrin-5B C(1)-methyltransferase">
    <location>
        <begin position="1"/>
        <end position="379"/>
    </location>
</feature>
<dbReference type="EC" id="2.1.1.195" evidence="1"/>
<dbReference type="EMBL" id="CP000026">
    <property type="protein sequence ID" value="AAV76827.1"/>
    <property type="molecule type" value="Genomic_DNA"/>
</dbReference>
<dbReference type="RefSeq" id="WP_001292919.1">
    <property type="nucleotide sequence ID" value="NC_006511.1"/>
</dbReference>
<dbReference type="SMR" id="Q5PDT5"/>
<dbReference type="KEGG" id="spt:SPA0839"/>
<dbReference type="HOGENOM" id="CLU_041273_1_0_6"/>
<dbReference type="UniPathway" id="UPA00148">
    <property type="reaction ID" value="UER00227"/>
</dbReference>
<dbReference type="Proteomes" id="UP000008185">
    <property type="component" value="Chromosome"/>
</dbReference>
<dbReference type="GO" id="GO:0043780">
    <property type="term" value="F:cobalt-precorrin-5B C1-methyltransferase activity"/>
    <property type="evidence" value="ECO:0007669"/>
    <property type="project" value="RHEA"/>
</dbReference>
<dbReference type="GO" id="GO:0019251">
    <property type="term" value="P:anaerobic cobalamin biosynthetic process"/>
    <property type="evidence" value="ECO:0007669"/>
    <property type="project" value="UniProtKB-UniRule"/>
</dbReference>
<dbReference type="GO" id="GO:0032259">
    <property type="term" value="P:methylation"/>
    <property type="evidence" value="ECO:0007669"/>
    <property type="project" value="UniProtKB-KW"/>
</dbReference>
<dbReference type="Gene3D" id="3.30.2110.10">
    <property type="entry name" value="CbiD-like"/>
    <property type="match status" value="1"/>
</dbReference>
<dbReference type="HAMAP" id="MF_00787">
    <property type="entry name" value="CbiD"/>
    <property type="match status" value="1"/>
</dbReference>
<dbReference type="InterPro" id="IPR002748">
    <property type="entry name" value="CbiD"/>
</dbReference>
<dbReference type="InterPro" id="IPR036074">
    <property type="entry name" value="CbiD_sf"/>
</dbReference>
<dbReference type="NCBIfam" id="TIGR00312">
    <property type="entry name" value="cbiD"/>
    <property type="match status" value="1"/>
</dbReference>
<dbReference type="PANTHER" id="PTHR35863">
    <property type="entry name" value="COBALT-PRECORRIN-5B C(1)-METHYLTRANSFERASE"/>
    <property type="match status" value="1"/>
</dbReference>
<dbReference type="PANTHER" id="PTHR35863:SF1">
    <property type="entry name" value="COBALT-PRECORRIN-5B C(1)-METHYLTRANSFERASE"/>
    <property type="match status" value="1"/>
</dbReference>
<dbReference type="Pfam" id="PF01888">
    <property type="entry name" value="CbiD"/>
    <property type="match status" value="1"/>
</dbReference>
<dbReference type="PIRSF" id="PIRSF026782">
    <property type="entry name" value="CbiD"/>
    <property type="match status" value="1"/>
</dbReference>
<dbReference type="SUPFAM" id="SSF111342">
    <property type="entry name" value="CbiD-like"/>
    <property type="match status" value="1"/>
</dbReference>
<gene>
    <name evidence="1" type="primary">cbiD</name>
    <name type="ordered locus">SPA0839</name>
</gene>
<organism>
    <name type="scientific">Salmonella paratyphi A (strain ATCC 9150 / SARB42)</name>
    <dbReference type="NCBI Taxonomy" id="295319"/>
    <lineage>
        <taxon>Bacteria</taxon>
        <taxon>Pseudomonadati</taxon>
        <taxon>Pseudomonadota</taxon>
        <taxon>Gammaproteobacteria</taxon>
        <taxon>Enterobacterales</taxon>
        <taxon>Enterobacteriaceae</taxon>
        <taxon>Salmonella</taxon>
    </lineage>
</organism>
<sequence>MSELSFDAPVWRHGKALRKGYTTGSCATAAAKVAALMVLRQHLIHQVSIVTPSGVTLCLNVESPHIEGQQAIAAIRKDGGDDVDATHGMLIFARVTLNDSGEITLTGGEGIGTVTRKGVGLPLGSAAINRTPRHTIESAVREAIGPARGADVEIFAPEGEVRAQKTYNSRLGILGGISIIGTTGIVTPMSEESWKRSLSLELEIKRASGLTRVILVPGNHGERFVREQMGVDTQAVVTMSNFVGYMIEEAVRLGFCQIVLVGHPGKLIKIAAGIFHTHSHIADARMETLVAHLALLGAPLELLTLVGDCDTTEAAMEHIEAYGFGHIYNHLARRICLRVMQMRRFTKTPPVCDAILFSFDNHILGSNRPVDEIAKELQC</sequence>
<comment type="function">
    <text evidence="1">Catalyzes the methylation of C-1 in cobalt-precorrin-5B to form cobalt-precorrin-6A.</text>
</comment>
<comment type="catalytic activity">
    <reaction evidence="1">
        <text>Co-precorrin-5B + S-adenosyl-L-methionine = Co-precorrin-6A + S-adenosyl-L-homocysteine</text>
        <dbReference type="Rhea" id="RHEA:26285"/>
        <dbReference type="ChEBI" id="CHEBI:57856"/>
        <dbReference type="ChEBI" id="CHEBI:59789"/>
        <dbReference type="ChEBI" id="CHEBI:60063"/>
        <dbReference type="ChEBI" id="CHEBI:60064"/>
        <dbReference type="EC" id="2.1.1.195"/>
    </reaction>
</comment>
<comment type="pathway">
    <text evidence="1">Cofactor biosynthesis; adenosylcobalamin biosynthesis; cob(II)yrinate a,c-diamide from sirohydrochlorin (anaerobic route): step 6/10.</text>
</comment>
<comment type="similarity">
    <text evidence="1">Belongs to the CbiD family.</text>
</comment>
<protein>
    <recommendedName>
        <fullName evidence="1">Cobalt-precorrin-5B C(1)-methyltransferase</fullName>
        <ecNumber evidence="1">2.1.1.195</ecNumber>
    </recommendedName>
    <alternativeName>
        <fullName evidence="1">Cobalt-precorrin-6A synthase</fullName>
    </alternativeName>
</protein>
<keyword id="KW-0169">Cobalamin biosynthesis</keyword>
<keyword id="KW-0489">Methyltransferase</keyword>
<keyword id="KW-0949">S-adenosyl-L-methionine</keyword>
<keyword id="KW-0808">Transferase</keyword>
<evidence type="ECO:0000255" key="1">
    <source>
        <dbReference type="HAMAP-Rule" id="MF_00787"/>
    </source>
</evidence>
<reference key="1">
    <citation type="journal article" date="2004" name="Nat. Genet.">
        <title>Comparison of genome degradation in Paratyphi A and Typhi, human-restricted serovars of Salmonella enterica that cause typhoid.</title>
        <authorList>
            <person name="McClelland M."/>
            <person name="Sanderson K.E."/>
            <person name="Clifton S.W."/>
            <person name="Latreille P."/>
            <person name="Porwollik S."/>
            <person name="Sabo A."/>
            <person name="Meyer R."/>
            <person name="Bieri T."/>
            <person name="Ozersky P."/>
            <person name="McLellan M."/>
            <person name="Harkins C.R."/>
            <person name="Wang C."/>
            <person name="Nguyen C."/>
            <person name="Berghoff A."/>
            <person name="Elliott G."/>
            <person name="Kohlberg S."/>
            <person name="Strong C."/>
            <person name="Du F."/>
            <person name="Carter J."/>
            <person name="Kremizki C."/>
            <person name="Layman D."/>
            <person name="Leonard S."/>
            <person name="Sun H."/>
            <person name="Fulton L."/>
            <person name="Nash W."/>
            <person name="Miner T."/>
            <person name="Minx P."/>
            <person name="Delehaunty K."/>
            <person name="Fronick C."/>
            <person name="Magrini V."/>
            <person name="Nhan M."/>
            <person name="Warren W."/>
            <person name="Florea L."/>
            <person name="Spieth J."/>
            <person name="Wilson R.K."/>
        </authorList>
    </citation>
    <scope>NUCLEOTIDE SEQUENCE [LARGE SCALE GENOMIC DNA]</scope>
    <source>
        <strain>ATCC 9150 / SARB42</strain>
    </source>
</reference>